<sequence>MKSLQALFGGTFDPVHYGHLKPVETLANLIGLTRVTIIPNNVPPHRPQPEANSVQRKHMLELAIADKPLFTLDERELKRNAPSYTAQTLKEWRQEQGPDVPLAFIIGQDSLLTFPTWYEYETILDNAHLIVCRRPGYPLEMAQPQYQQWLEDHLTHNPEDLHLQPAGKIYLAETPWFNISATIIRERLQNGESCDDLLPEPVLTYINQQGLYR</sequence>
<proteinExistence type="inferred from homology"/>
<reference key="1">
    <citation type="journal article" date="2001" name="Nature">
        <title>Genome sequence of enterohaemorrhagic Escherichia coli O157:H7.</title>
        <authorList>
            <person name="Perna N.T."/>
            <person name="Plunkett G. III"/>
            <person name="Burland V."/>
            <person name="Mau B."/>
            <person name="Glasner J.D."/>
            <person name="Rose D.J."/>
            <person name="Mayhew G.F."/>
            <person name="Evans P.S."/>
            <person name="Gregor J."/>
            <person name="Kirkpatrick H.A."/>
            <person name="Posfai G."/>
            <person name="Hackett J."/>
            <person name="Klink S."/>
            <person name="Boutin A."/>
            <person name="Shao Y."/>
            <person name="Miller L."/>
            <person name="Grotbeck E.J."/>
            <person name="Davis N.W."/>
            <person name="Lim A."/>
            <person name="Dimalanta E.T."/>
            <person name="Potamousis K."/>
            <person name="Apodaca J."/>
            <person name="Anantharaman T.S."/>
            <person name="Lin J."/>
            <person name="Yen G."/>
            <person name="Schwartz D.C."/>
            <person name="Welch R.A."/>
            <person name="Blattner F.R."/>
        </authorList>
    </citation>
    <scope>NUCLEOTIDE SEQUENCE [LARGE SCALE GENOMIC DNA]</scope>
    <source>
        <strain>O157:H7 / EDL933 / ATCC 700927 / EHEC</strain>
    </source>
</reference>
<reference key="2">
    <citation type="journal article" date="2001" name="DNA Res.">
        <title>Complete genome sequence of enterohemorrhagic Escherichia coli O157:H7 and genomic comparison with a laboratory strain K-12.</title>
        <authorList>
            <person name="Hayashi T."/>
            <person name="Makino K."/>
            <person name="Ohnishi M."/>
            <person name="Kurokawa K."/>
            <person name="Ishii K."/>
            <person name="Yokoyama K."/>
            <person name="Han C.-G."/>
            <person name="Ohtsubo E."/>
            <person name="Nakayama K."/>
            <person name="Murata T."/>
            <person name="Tanaka M."/>
            <person name="Tobe T."/>
            <person name="Iida T."/>
            <person name="Takami H."/>
            <person name="Honda T."/>
            <person name="Sasakawa C."/>
            <person name="Ogasawara N."/>
            <person name="Yasunaga T."/>
            <person name="Kuhara S."/>
            <person name="Shiba T."/>
            <person name="Hattori M."/>
            <person name="Shinagawa H."/>
        </authorList>
    </citation>
    <scope>NUCLEOTIDE SEQUENCE [LARGE SCALE GENOMIC DNA]</scope>
    <source>
        <strain>O157:H7 / Sakai / RIMD 0509952 / EHEC</strain>
    </source>
</reference>
<keyword id="KW-0067">ATP-binding</keyword>
<keyword id="KW-0520">NAD</keyword>
<keyword id="KW-0547">Nucleotide-binding</keyword>
<keyword id="KW-0548">Nucleotidyltransferase</keyword>
<keyword id="KW-0662">Pyridine nucleotide biosynthesis</keyword>
<keyword id="KW-1185">Reference proteome</keyword>
<keyword id="KW-0808">Transferase</keyword>
<evidence type="ECO:0000250" key="1"/>
<evidence type="ECO:0000305" key="2"/>
<comment type="function">
    <text evidence="1">Catalyzes the reversible adenylation of nicotinate mononucleotide (NaMN) to nicotinic acid adenine dinucleotide (NaAD).</text>
</comment>
<comment type="catalytic activity">
    <reaction>
        <text>nicotinate beta-D-ribonucleotide + ATP + H(+) = deamido-NAD(+) + diphosphate</text>
        <dbReference type="Rhea" id="RHEA:22860"/>
        <dbReference type="ChEBI" id="CHEBI:15378"/>
        <dbReference type="ChEBI" id="CHEBI:30616"/>
        <dbReference type="ChEBI" id="CHEBI:33019"/>
        <dbReference type="ChEBI" id="CHEBI:57502"/>
        <dbReference type="ChEBI" id="CHEBI:58437"/>
        <dbReference type="EC" id="2.7.7.18"/>
    </reaction>
</comment>
<comment type="pathway">
    <text>Cofactor biosynthesis; NAD(+) biosynthesis; deamido-NAD(+) from nicotinate D-ribonucleotide: step 1/1.</text>
</comment>
<comment type="similarity">
    <text evidence="2">Belongs to the NadD family.</text>
</comment>
<name>NADD_ECO57</name>
<protein>
    <recommendedName>
        <fullName>Nicotinate-nucleotide adenylyltransferase</fullName>
        <ecNumber>2.7.7.18</ecNumber>
    </recommendedName>
    <alternativeName>
        <fullName>Deamido-NAD(+) diphosphorylase</fullName>
    </alternativeName>
    <alternativeName>
        <fullName>Deamido-NAD(+) pyrophosphorylase</fullName>
    </alternativeName>
    <alternativeName>
        <fullName>Nicotinate mononucleotide adenylyltransferase</fullName>
        <shortName>NaMN adenylyltransferase</shortName>
    </alternativeName>
</protein>
<accession>Q8XBP0</accession>
<dbReference type="EC" id="2.7.7.18"/>
<dbReference type="EMBL" id="AE005174">
    <property type="protein sequence ID" value="AAG54973.1"/>
    <property type="molecule type" value="Genomic_DNA"/>
</dbReference>
<dbReference type="EMBL" id="BA000007">
    <property type="protein sequence ID" value="BAB34100.1"/>
    <property type="molecule type" value="Genomic_DNA"/>
</dbReference>
<dbReference type="PIR" id="A85564">
    <property type="entry name" value="A85564"/>
</dbReference>
<dbReference type="PIR" id="E90713">
    <property type="entry name" value="E90713"/>
</dbReference>
<dbReference type="RefSeq" id="NP_308704.1">
    <property type="nucleotide sequence ID" value="NC_002695.1"/>
</dbReference>
<dbReference type="RefSeq" id="WP_000838887.1">
    <property type="nucleotide sequence ID" value="NZ_VOAI01000012.1"/>
</dbReference>
<dbReference type="SMR" id="Q8XBP0"/>
<dbReference type="STRING" id="155864.Z0786"/>
<dbReference type="GeneID" id="917038"/>
<dbReference type="KEGG" id="ece:Z0786"/>
<dbReference type="KEGG" id="ecs:ECs_0677"/>
<dbReference type="PATRIC" id="fig|386585.9.peg.789"/>
<dbReference type="eggNOG" id="COG1057">
    <property type="taxonomic scope" value="Bacteria"/>
</dbReference>
<dbReference type="HOGENOM" id="CLU_069765_0_0_6"/>
<dbReference type="OMA" id="WIMGADS"/>
<dbReference type="UniPathway" id="UPA00253">
    <property type="reaction ID" value="UER00332"/>
</dbReference>
<dbReference type="Proteomes" id="UP000000558">
    <property type="component" value="Chromosome"/>
</dbReference>
<dbReference type="Proteomes" id="UP000002519">
    <property type="component" value="Chromosome"/>
</dbReference>
<dbReference type="GO" id="GO:0005524">
    <property type="term" value="F:ATP binding"/>
    <property type="evidence" value="ECO:0007669"/>
    <property type="project" value="UniProtKB-KW"/>
</dbReference>
<dbReference type="GO" id="GO:0004515">
    <property type="term" value="F:nicotinate-nucleotide adenylyltransferase activity"/>
    <property type="evidence" value="ECO:0007669"/>
    <property type="project" value="UniProtKB-UniRule"/>
</dbReference>
<dbReference type="GO" id="GO:0009435">
    <property type="term" value="P:NAD biosynthetic process"/>
    <property type="evidence" value="ECO:0007669"/>
    <property type="project" value="UniProtKB-UniRule"/>
</dbReference>
<dbReference type="CDD" id="cd02165">
    <property type="entry name" value="NMNAT"/>
    <property type="match status" value="1"/>
</dbReference>
<dbReference type="FunFam" id="3.40.50.620:FF:000039">
    <property type="entry name" value="Probable nicotinate-nucleotide adenylyltransferase"/>
    <property type="match status" value="1"/>
</dbReference>
<dbReference type="Gene3D" id="3.40.50.620">
    <property type="entry name" value="HUPs"/>
    <property type="match status" value="1"/>
</dbReference>
<dbReference type="HAMAP" id="MF_00244">
    <property type="entry name" value="NaMN_adenylyltr"/>
    <property type="match status" value="1"/>
</dbReference>
<dbReference type="InterPro" id="IPR004821">
    <property type="entry name" value="Cyt_trans-like"/>
</dbReference>
<dbReference type="InterPro" id="IPR005248">
    <property type="entry name" value="NadD/NMNAT"/>
</dbReference>
<dbReference type="InterPro" id="IPR014729">
    <property type="entry name" value="Rossmann-like_a/b/a_fold"/>
</dbReference>
<dbReference type="NCBIfam" id="TIGR00125">
    <property type="entry name" value="cyt_tran_rel"/>
    <property type="match status" value="1"/>
</dbReference>
<dbReference type="NCBIfam" id="TIGR00482">
    <property type="entry name" value="nicotinate (nicotinamide) nucleotide adenylyltransferase"/>
    <property type="match status" value="1"/>
</dbReference>
<dbReference type="NCBIfam" id="NF000839">
    <property type="entry name" value="PRK00071.1-1"/>
    <property type="match status" value="1"/>
</dbReference>
<dbReference type="NCBIfam" id="NF000840">
    <property type="entry name" value="PRK00071.1-3"/>
    <property type="match status" value="1"/>
</dbReference>
<dbReference type="PANTHER" id="PTHR39321">
    <property type="entry name" value="NICOTINATE-NUCLEOTIDE ADENYLYLTRANSFERASE-RELATED"/>
    <property type="match status" value="1"/>
</dbReference>
<dbReference type="PANTHER" id="PTHR39321:SF3">
    <property type="entry name" value="PHOSPHOPANTETHEINE ADENYLYLTRANSFERASE"/>
    <property type="match status" value="1"/>
</dbReference>
<dbReference type="Pfam" id="PF01467">
    <property type="entry name" value="CTP_transf_like"/>
    <property type="match status" value="1"/>
</dbReference>
<dbReference type="SUPFAM" id="SSF52374">
    <property type="entry name" value="Nucleotidylyl transferase"/>
    <property type="match status" value="1"/>
</dbReference>
<organism>
    <name type="scientific">Escherichia coli O157:H7</name>
    <dbReference type="NCBI Taxonomy" id="83334"/>
    <lineage>
        <taxon>Bacteria</taxon>
        <taxon>Pseudomonadati</taxon>
        <taxon>Pseudomonadota</taxon>
        <taxon>Gammaproteobacteria</taxon>
        <taxon>Enterobacterales</taxon>
        <taxon>Enterobacteriaceae</taxon>
        <taxon>Escherichia</taxon>
    </lineage>
</organism>
<feature type="chain" id="PRO_0000181408" description="Nicotinate-nucleotide adenylyltransferase">
    <location>
        <begin position="1"/>
        <end position="213"/>
    </location>
</feature>
<gene>
    <name type="primary">nadD</name>
    <name type="ordered locus">Z0786</name>
    <name type="ordered locus">ECs0677</name>
</gene>